<accession>Q6ENW7</accession>
<proteinExistence type="inferred from homology"/>
<geneLocation type="chloroplast"/>
<reference key="1">
    <citation type="journal article" date="2004" name="DNA Res.">
        <title>Complete nucleotide sequence of the sugarcane (Saccharum officinarum) chloroplast genome: a comparative analysis of four monocot chloroplast genomes.</title>
        <authorList>
            <person name="Asano T."/>
            <person name="Tsudzuki T."/>
            <person name="Takahashi S."/>
            <person name="Shimada H."/>
            <person name="Kadowaki K."/>
        </authorList>
    </citation>
    <scope>NUCLEOTIDE SEQUENCE [LARGE SCALE GENOMIC DNA]</scope>
</reference>
<evidence type="ECO:0000255" key="1">
    <source>
        <dbReference type="HAMAP-Rule" id="MF_01398"/>
    </source>
</evidence>
<gene>
    <name evidence="1" type="primary">atpF</name>
</gene>
<name>ATPF_SACOF</name>
<sequence>MKNVTHSFVFLAHWPFAGSFGLNTDILATNLINLTVVVGVLIFFGKGVLKDLLDNRKQRILSTIRNSEELRRGTLEQLEKARIRLQKVELEADEYRMNGYSEIEREKENLINATSISLEQLEKSKNETLYFEKQRAMNQVRQRVFQQAVQGALGTLNSCLNTELHFRTIRANIGILGAIEWKR</sequence>
<protein>
    <recommendedName>
        <fullName evidence="1">ATP synthase subunit b, chloroplastic</fullName>
    </recommendedName>
    <alternativeName>
        <fullName evidence="1">ATP synthase F(0) sector subunit b</fullName>
    </alternativeName>
    <alternativeName>
        <fullName evidence="1">ATPase subunit I</fullName>
    </alternativeName>
</protein>
<dbReference type="EMBL" id="AP006714">
    <property type="protein sequence ID" value="BAD27289.1"/>
    <property type="molecule type" value="Genomic_DNA"/>
</dbReference>
<dbReference type="SMR" id="Q6ENW7"/>
<dbReference type="GO" id="GO:0009535">
    <property type="term" value="C:chloroplast thylakoid membrane"/>
    <property type="evidence" value="ECO:0007669"/>
    <property type="project" value="UniProtKB-SubCell"/>
</dbReference>
<dbReference type="GO" id="GO:0045259">
    <property type="term" value="C:proton-transporting ATP synthase complex"/>
    <property type="evidence" value="ECO:0007669"/>
    <property type="project" value="UniProtKB-KW"/>
</dbReference>
<dbReference type="GO" id="GO:0005524">
    <property type="term" value="F:ATP binding"/>
    <property type="evidence" value="ECO:0007669"/>
    <property type="project" value="UniProtKB-KW"/>
</dbReference>
<dbReference type="GO" id="GO:0046933">
    <property type="term" value="F:proton-transporting ATP synthase activity, rotational mechanism"/>
    <property type="evidence" value="ECO:0007669"/>
    <property type="project" value="UniProtKB-UniRule"/>
</dbReference>
<dbReference type="CDD" id="cd06503">
    <property type="entry name" value="ATP-synt_Fo_b"/>
    <property type="match status" value="1"/>
</dbReference>
<dbReference type="HAMAP" id="MF_01398">
    <property type="entry name" value="ATP_synth_b_bprime"/>
    <property type="match status" value="1"/>
</dbReference>
<dbReference type="InterPro" id="IPR002146">
    <property type="entry name" value="ATP_synth_b/b'su_bac/chlpt"/>
</dbReference>
<dbReference type="PANTHER" id="PTHR34264">
    <property type="entry name" value="ATP SYNTHASE SUBUNIT B, CHLOROPLASTIC"/>
    <property type="match status" value="1"/>
</dbReference>
<dbReference type="PANTHER" id="PTHR34264:SF8">
    <property type="entry name" value="ATP SYNTHASE SUBUNIT B, CHLOROPLASTIC"/>
    <property type="match status" value="1"/>
</dbReference>
<dbReference type="Pfam" id="PF00430">
    <property type="entry name" value="ATP-synt_B"/>
    <property type="match status" value="1"/>
</dbReference>
<organism>
    <name type="scientific">Saccharum officinarum</name>
    <name type="common">Sugarcane</name>
    <dbReference type="NCBI Taxonomy" id="4547"/>
    <lineage>
        <taxon>Eukaryota</taxon>
        <taxon>Viridiplantae</taxon>
        <taxon>Streptophyta</taxon>
        <taxon>Embryophyta</taxon>
        <taxon>Tracheophyta</taxon>
        <taxon>Spermatophyta</taxon>
        <taxon>Magnoliopsida</taxon>
        <taxon>Liliopsida</taxon>
        <taxon>Poales</taxon>
        <taxon>Poaceae</taxon>
        <taxon>PACMAD clade</taxon>
        <taxon>Panicoideae</taxon>
        <taxon>Andropogonodae</taxon>
        <taxon>Andropogoneae</taxon>
        <taxon>Saccharinae</taxon>
        <taxon>Saccharum</taxon>
        <taxon>Saccharum officinarum species complex</taxon>
    </lineage>
</organism>
<keyword id="KW-0066">ATP synthesis</keyword>
<keyword id="KW-0067">ATP-binding</keyword>
<keyword id="KW-0138">CF(0)</keyword>
<keyword id="KW-0150">Chloroplast</keyword>
<keyword id="KW-0375">Hydrogen ion transport</keyword>
<keyword id="KW-0406">Ion transport</keyword>
<keyword id="KW-0472">Membrane</keyword>
<keyword id="KW-0547">Nucleotide-binding</keyword>
<keyword id="KW-0934">Plastid</keyword>
<keyword id="KW-0793">Thylakoid</keyword>
<keyword id="KW-0812">Transmembrane</keyword>
<keyword id="KW-1133">Transmembrane helix</keyword>
<keyword id="KW-0813">Transport</keyword>
<comment type="function">
    <text evidence="1">F(1)F(0) ATP synthase produces ATP from ADP in the presence of a proton or sodium gradient. F-type ATPases consist of two structural domains, F(1) containing the extramembraneous catalytic core and F(0) containing the membrane proton channel, linked together by a central stalk and a peripheral stalk. During catalysis, ATP synthesis in the catalytic domain of F(1) is coupled via a rotary mechanism of the central stalk subunits to proton translocation.</text>
</comment>
<comment type="function">
    <text evidence="1">Component of the F(0) channel, it forms part of the peripheral stalk, linking F(1) to F(0).</text>
</comment>
<comment type="subunit">
    <text evidence="1">F-type ATPases have 2 components, F(1) - the catalytic core - and F(0) - the membrane proton channel. F(1) has five subunits: alpha(3), beta(3), gamma(1), delta(1), epsilon(1). F(0) has four main subunits: a(1), b(1), b'(1) and c(10-14). The alpha and beta chains form an alternating ring which encloses part of the gamma chain. F(1) is attached to F(0) by a central stalk formed by the gamma and epsilon chains, while a peripheral stalk is formed by the delta, b and b' chains.</text>
</comment>
<comment type="subcellular location">
    <subcellularLocation>
        <location evidence="1">Plastid</location>
        <location evidence="1">Chloroplast thylakoid membrane</location>
        <topology evidence="1">Single-pass membrane protein</topology>
    </subcellularLocation>
</comment>
<comment type="miscellaneous">
    <text>In plastids the F-type ATPase is also known as CF(1)CF(0).</text>
</comment>
<comment type="similarity">
    <text evidence="1">Belongs to the ATPase B chain family.</text>
</comment>
<feature type="chain" id="PRO_0000226899" description="ATP synthase subunit b, chloroplastic">
    <location>
        <begin position="1"/>
        <end position="183"/>
    </location>
</feature>
<feature type="transmembrane region" description="Helical" evidence="1">
    <location>
        <begin position="25"/>
        <end position="45"/>
    </location>
</feature>